<comment type="function">
    <text evidence="1">Hydrolyzes chitosan and chitooligosaccharides with retention of anomeric configuration. Has no activity against beta-D-galactoside, beta-D-glucuronide, beta-D-mannoside, chitin, glycol chitosan, cellulose, N,N'-diacetylchitibiose and pNP-GlcNAc (By similarity).</text>
</comment>
<comment type="catalytic activity">
    <reaction evidence="1">
        <text>Hydrolysis of chitosan or chitosan oligosaccharides to remove successive D-glucosamine residues from the non-reducing termini.</text>
        <dbReference type="EC" id="3.2.1.165"/>
    </reaction>
</comment>
<comment type="subunit">
    <text evidence="1">Monomer.</text>
</comment>
<comment type="subcellular location">
    <subcellularLocation>
        <location evidence="1">Secreted</location>
        <location evidence="1">Extracellular space</location>
    </subcellularLocation>
</comment>
<comment type="similarity">
    <text evidence="3">Belongs to the glycosyl hydrolase 2 family.</text>
</comment>
<reference evidence="4" key="1">
    <citation type="submission" date="2009-02" db="EMBL/GenBank/DDBJ databases">
        <title>Expressed sequence tags from Trichoderma virens reveal genes encoding for chitin modifying enzymes.</title>
        <authorList>
            <person name="Abdul Murad A.M."/>
            <person name="Badrun R."/>
            <person name="Yang Ahmad Z."/>
            <person name="Khairuddin F."/>
            <person name="Mohd Adnan A."/>
            <person name="Ahmad Zairun M."/>
            <person name="Kamaruddin S."/>
            <person name="Priyatno T.P."/>
            <person name="Quay D.H.X."/>
            <person name="Zainal Z."/>
            <person name="Mahadi N.M."/>
            <person name="Hassan O."/>
            <person name="Abu Bakar F.D."/>
        </authorList>
    </citation>
    <scope>NUCLEOTIDE SEQUENCE [MRNA]</scope>
</reference>
<accession>C0LRA7</accession>
<feature type="signal peptide" evidence="3">
    <location>
        <begin position="1"/>
        <end position="18"/>
    </location>
</feature>
<feature type="propeptide" id="PRO_0000399049" evidence="2">
    <location>
        <begin position="19"/>
        <end position="26"/>
    </location>
</feature>
<feature type="chain" id="PRO_0000399050" description="Exo-beta-D-glucosaminidase" evidence="2 3">
    <location>
        <begin position="27"/>
        <end position="890"/>
    </location>
</feature>
<feature type="active site" description="Proton donor" evidence="2">
    <location>
        <position position="462"/>
    </location>
</feature>
<feature type="active site" description="Nucleophile" evidence="2">
    <location>
        <position position="537"/>
    </location>
</feature>
<feature type="glycosylation site" description="N-linked (GlcNAc...) asparagine" evidence="3">
    <location>
        <position position="194"/>
    </location>
</feature>
<feature type="glycosylation site" description="N-linked (GlcNAc...) asparagine" evidence="3">
    <location>
        <position position="334"/>
    </location>
</feature>
<feature type="glycosylation site" description="N-linked (GlcNAc...) asparagine" evidence="3">
    <location>
        <position position="438"/>
    </location>
</feature>
<feature type="glycosylation site" description="N-linked (GlcNAc...) asparagine" evidence="3">
    <location>
        <position position="576"/>
    </location>
</feature>
<feature type="glycosylation site" description="N-linked (GlcNAc...) asparagine" evidence="3">
    <location>
        <position position="687"/>
    </location>
</feature>
<evidence type="ECO:0000250" key="1">
    <source>
        <dbReference type="UniProtKB" id="Q4R1C4"/>
    </source>
</evidence>
<evidence type="ECO:0000250" key="2">
    <source>
        <dbReference type="UniProtKB" id="Q56F26"/>
    </source>
</evidence>
<evidence type="ECO:0000255" key="3"/>
<evidence type="ECO:0000312" key="4">
    <source>
        <dbReference type="EMBL" id="ACN62417.1"/>
    </source>
</evidence>
<gene>
    <name evidence="4" type="primary">gls1</name>
</gene>
<protein>
    <recommendedName>
        <fullName evidence="4">Exo-beta-D-glucosaminidase</fullName>
        <ecNumber>3.2.1.165</ecNumber>
    </recommendedName>
</protein>
<organism>
    <name type="scientific">Hypocrea virens</name>
    <name type="common">Gliocladium virens</name>
    <name type="synonym">Trichoderma virens</name>
    <dbReference type="NCBI Taxonomy" id="29875"/>
    <lineage>
        <taxon>Eukaryota</taxon>
        <taxon>Fungi</taxon>
        <taxon>Dikarya</taxon>
        <taxon>Ascomycota</taxon>
        <taxon>Pezizomycotina</taxon>
        <taxon>Sordariomycetes</taxon>
        <taxon>Hypocreomycetidae</taxon>
        <taxon>Hypocreales</taxon>
        <taxon>Hypocreaceae</taxon>
        <taxon>Trichoderma</taxon>
    </lineage>
</organism>
<dbReference type="EC" id="3.2.1.165"/>
<dbReference type="EMBL" id="FJ754260">
    <property type="protein sequence ID" value="ACN62417.1"/>
    <property type="molecule type" value="mRNA"/>
</dbReference>
<dbReference type="SMR" id="C0LRA7"/>
<dbReference type="CAZy" id="GH2">
    <property type="family name" value="Glycoside Hydrolase Family 2"/>
</dbReference>
<dbReference type="GlyCosmos" id="C0LRA7">
    <property type="glycosylation" value="5 sites, No reported glycans"/>
</dbReference>
<dbReference type="GO" id="GO:0005576">
    <property type="term" value="C:extracellular region"/>
    <property type="evidence" value="ECO:0000250"/>
    <property type="project" value="UniProtKB"/>
</dbReference>
<dbReference type="GO" id="GO:0052761">
    <property type="term" value="F:exo-1,4-beta-D-glucosaminidase activity"/>
    <property type="evidence" value="ECO:0007669"/>
    <property type="project" value="UniProtKB-EC"/>
</dbReference>
<dbReference type="GO" id="GO:0004553">
    <property type="term" value="F:hydrolase activity, hydrolyzing O-glycosyl compounds"/>
    <property type="evidence" value="ECO:0000250"/>
    <property type="project" value="UniProtKB"/>
</dbReference>
<dbReference type="GO" id="GO:0006032">
    <property type="term" value="P:chitin catabolic process"/>
    <property type="evidence" value="ECO:0007669"/>
    <property type="project" value="UniProtKB-KW"/>
</dbReference>
<dbReference type="GO" id="GO:0000272">
    <property type="term" value="P:polysaccharide catabolic process"/>
    <property type="evidence" value="ECO:0000250"/>
    <property type="project" value="UniProtKB"/>
</dbReference>
<dbReference type="FunFam" id="2.60.120.260:FF:000182">
    <property type="entry name" value="Exo-beta-D-glucosaminidase"/>
    <property type="match status" value="1"/>
</dbReference>
<dbReference type="FunFam" id="2.60.40.10:FF:001725">
    <property type="entry name" value="Exo-beta-D-glucosaminidase"/>
    <property type="match status" value="1"/>
</dbReference>
<dbReference type="FunFam" id="2.60.40.10:FF:002523">
    <property type="entry name" value="Exo-beta-D-glucosaminidase"/>
    <property type="match status" value="1"/>
</dbReference>
<dbReference type="FunFam" id="3.20.20.80:FF:000166">
    <property type="entry name" value="Exo-beta-D-glucosaminidase"/>
    <property type="match status" value="1"/>
</dbReference>
<dbReference type="FunFam" id="2.60.40.10:FF:002252">
    <property type="entry name" value="Glycoside hydrolase family 2"/>
    <property type="match status" value="1"/>
</dbReference>
<dbReference type="Gene3D" id="2.60.120.260">
    <property type="entry name" value="Galactose-binding domain-like"/>
    <property type="match status" value="1"/>
</dbReference>
<dbReference type="Gene3D" id="3.20.20.80">
    <property type="entry name" value="Glycosidases"/>
    <property type="match status" value="1"/>
</dbReference>
<dbReference type="Gene3D" id="2.60.40.10">
    <property type="entry name" value="Immunoglobulins"/>
    <property type="match status" value="3"/>
</dbReference>
<dbReference type="InterPro" id="IPR036156">
    <property type="entry name" value="Beta-gal/glucu_dom_sf"/>
</dbReference>
<dbReference type="InterPro" id="IPR054593">
    <property type="entry name" value="Beta-mannosidase-like_N2"/>
</dbReference>
<dbReference type="InterPro" id="IPR043534">
    <property type="entry name" value="EBDG/EBM"/>
</dbReference>
<dbReference type="InterPro" id="IPR008979">
    <property type="entry name" value="Galactose-bd-like_sf"/>
</dbReference>
<dbReference type="InterPro" id="IPR006102">
    <property type="entry name" value="Glyco_hydro_2_Ig-like"/>
</dbReference>
<dbReference type="InterPro" id="IPR017853">
    <property type="entry name" value="Glycoside_hydrolase_SF"/>
</dbReference>
<dbReference type="InterPro" id="IPR013783">
    <property type="entry name" value="Ig-like_fold"/>
</dbReference>
<dbReference type="InterPro" id="IPR041351">
    <property type="entry name" value="Ig_GlcNase"/>
</dbReference>
<dbReference type="InterPro" id="IPR041447">
    <property type="entry name" value="Mannosidase_ig"/>
</dbReference>
<dbReference type="PANTHER" id="PTHR43536">
    <property type="entry name" value="MANNOSYLGLYCOPROTEIN ENDO-BETA-MANNOSIDASE"/>
    <property type="match status" value="1"/>
</dbReference>
<dbReference type="PANTHER" id="PTHR43536:SF1">
    <property type="entry name" value="MANNOSYLGLYCOPROTEIN ENDO-BETA-MANNOSIDASE"/>
    <property type="match status" value="1"/>
</dbReference>
<dbReference type="Pfam" id="PF00703">
    <property type="entry name" value="Glyco_hydro_2"/>
    <property type="match status" value="1"/>
</dbReference>
<dbReference type="Pfam" id="PF22666">
    <property type="entry name" value="Glyco_hydro_2_N2"/>
    <property type="match status" value="1"/>
</dbReference>
<dbReference type="Pfam" id="PF18368">
    <property type="entry name" value="Ig_GlcNase"/>
    <property type="match status" value="1"/>
</dbReference>
<dbReference type="Pfam" id="PF17786">
    <property type="entry name" value="Mannosidase_ig"/>
    <property type="match status" value="1"/>
</dbReference>
<dbReference type="SUPFAM" id="SSF51445">
    <property type="entry name" value="(Trans)glycosidases"/>
    <property type="match status" value="1"/>
</dbReference>
<dbReference type="SUPFAM" id="SSF49303">
    <property type="entry name" value="beta-Galactosidase/glucuronidase domain"/>
    <property type="match status" value="3"/>
</dbReference>
<dbReference type="SUPFAM" id="SSF49785">
    <property type="entry name" value="Galactose-binding domain-like"/>
    <property type="match status" value="1"/>
</dbReference>
<sequence length="890" mass="98811">MIAKAVAALLLGSGLASAAGTPLTSKAGDKVPIPDWDLKSSSEVSKDLKGLSKPGVDTSAWYHAGTSKCTLMACLLNAGIYKDEDLWYSDNLNHFNWGQFSIPWLYRHEFALAPAKGKHFILQTNGITSKADLFFNGQQIADSEYQAGAYAGRTYDITSLAAKDNAFVVQVHPTDYLYDFALGYVDWNPYPPDNGTGIWRDITVKETGSVSMGPISVVVDIDVPVESSPAKVTIRAEAQNLENVAVVLDAEAVVSGNSCSGGPLKQTVKLAPGEKKLVEFTKTIAKPKIWWPKQWGDQPLYNAKVTFSVNKAVSDTAQTNFGVRKVTSFVNQYNDTQYSVNGHPFQVVGGGYGADMFLRWDGDRFTRIVEYMLDMHQNTIRLEGKMEHPELYEICDKYGLMVMPGWECCDKWEAWAYNDELAIFPPPVWDDNDYQTANYSMIHEASMLQPHPSVLTFLVGSDFWPNDEAVVLYVNALKNAGWQTPIIASASKRGFPALLGPGGMKMDGPYDWVPPNYWYDTEPSEDRLGAAFGFGSELGAGVGTPELGSLKRFLSQSDLNDLWKNPNKNLYHMSTNVSSFYNRKIYNQGLFKRYGAPTSLDDYLLKAQMMDYEATRAQYEGFSSLWTASRPATGNIYWMLNNAWPSLHWNQFGYYMHPAGSYFGTKVGSRIEHVAYNYQKKEVWVINHSLDQTGPRKVDIELIDTNGKQIAKQSVNINTKANSGFKAADISSQIGKLSSVAFLRLILSDSKGNVLSRNVYWVTNSIDKLDWDSSTWYYTQVTSFVDYTPLNKLSAAQISVTTGSSRRVAGVPGTQTRTVTLENKPSVPAVFIRLTLVDKSGNDVNPVSWTDNYVTLWPKEKLQLEVGGWDASGDSIQVSGRNIAATTVKL</sequence>
<keyword id="KW-0119">Carbohydrate metabolism</keyword>
<keyword id="KW-0146">Chitin degradation</keyword>
<keyword id="KW-0325">Glycoprotein</keyword>
<keyword id="KW-0326">Glycosidase</keyword>
<keyword id="KW-0378">Hydrolase</keyword>
<keyword id="KW-0624">Polysaccharide degradation</keyword>
<keyword id="KW-0964">Secreted</keyword>
<keyword id="KW-0732">Signal</keyword>
<name>EBDG_HYPVI</name>
<proteinExistence type="evidence at transcript level"/>